<accession>Q26324</accession>
<organism>
    <name type="scientific">Carcinus maenas</name>
    <name type="common">Common shore crab</name>
    <name type="synonym">Green crab</name>
    <dbReference type="NCBI Taxonomy" id="6759"/>
    <lineage>
        <taxon>Eukaryota</taxon>
        <taxon>Metazoa</taxon>
        <taxon>Ecdysozoa</taxon>
        <taxon>Arthropoda</taxon>
        <taxon>Crustacea</taxon>
        <taxon>Multicrustacea</taxon>
        <taxon>Malacostraca</taxon>
        <taxon>Eumalacostraca</taxon>
        <taxon>Eucarida</taxon>
        <taxon>Decapoda</taxon>
        <taxon>Pleocyemata</taxon>
        <taxon>Brachyura</taxon>
        <taxon>Eubrachyura</taxon>
        <taxon>Portunoidea</taxon>
        <taxon>Carcinidae</taxon>
        <taxon>Carcinus</taxon>
    </lineage>
</organism>
<reference key="1">
    <citation type="journal article" date="1993" name="Biochem. Biophys. Res. Commun.">
        <title>Molecular cloning of crustacean red pigment concentrating hormone precursor.</title>
        <authorList>
            <person name="Linck B."/>
            <person name="Klein J.M."/>
            <person name="Mangerich S."/>
            <person name="Keller R."/>
            <person name="Weidemann W.M."/>
        </authorList>
    </citation>
    <scope>NUCLEOTIDE SEQUENCE [MRNA]</scope>
    <source>
        <tissue>Eyestalk</tissue>
    </source>
</reference>
<comment type="function">
    <text>This hormone adapts the animal to light backgrounds by stimulating concentration of the pigment of its red body-chromatophores.</text>
</comment>
<comment type="subcellular location">
    <subcellularLocation>
        <location>Secreted</location>
    </subcellularLocation>
</comment>
<comment type="similarity">
    <text evidence="2">Belongs to the AKH/HRTH/RPCH family.</text>
</comment>
<name>RPCH_CARMA</name>
<keyword id="KW-0027">Amidation</keyword>
<keyword id="KW-0165">Cleavage on pair of basic residues</keyword>
<keyword id="KW-0372">Hormone</keyword>
<keyword id="KW-0608">Pigment</keyword>
<keyword id="KW-0873">Pyrrolidone carboxylic acid</keyword>
<keyword id="KW-0964">Secreted</keyword>
<keyword id="KW-0732">Signal</keyword>
<feature type="signal peptide" evidence="1">
    <location>
        <begin position="1"/>
        <end position="25"/>
    </location>
</feature>
<feature type="chain" id="PRO_0000000937" description="Red pigment-concentrating prohormone">
    <location>
        <begin position="26"/>
        <end position="110"/>
    </location>
</feature>
<feature type="peptide" id="PRO_0000000938" description="Red pigment-concentrating hormone">
    <location>
        <begin position="26"/>
        <end position="33"/>
    </location>
</feature>
<feature type="chain" id="PRO_0000000939" description="RPCH-related peptide">
    <location>
        <begin position="37"/>
        <end position="110"/>
    </location>
</feature>
<feature type="modified residue" description="Pyrrolidone carboxylic acid" evidence="1">
    <location>
        <position position="26"/>
    </location>
</feature>
<feature type="modified residue" description="Tryptophan amide" evidence="1">
    <location>
        <position position="33"/>
    </location>
</feature>
<sequence>MVRRTGVTLLVVALVVVALVSSVSAQLNFSPGWGKRAAAGSGSSGGVGEAVSALHHSVGGAPGGVVPPGSSSSSGDSCGPIPVSAVMHIYRLIRNEAVRLVQCQDEEYLG</sequence>
<dbReference type="EMBL" id="S65357">
    <property type="protein sequence ID" value="AAB28133.1"/>
    <property type="molecule type" value="mRNA"/>
</dbReference>
<dbReference type="PIR" id="JN0761">
    <property type="entry name" value="JN0761"/>
</dbReference>
<dbReference type="SMR" id="Q26324"/>
<dbReference type="GO" id="GO:0005576">
    <property type="term" value="C:extracellular region"/>
    <property type="evidence" value="ECO:0007669"/>
    <property type="project" value="UniProtKB-SubCell"/>
</dbReference>
<dbReference type="GO" id="GO:0005179">
    <property type="term" value="F:hormone activity"/>
    <property type="evidence" value="ECO:0007669"/>
    <property type="project" value="UniProtKB-KW"/>
</dbReference>
<dbReference type="GO" id="GO:0031409">
    <property type="term" value="F:pigment binding"/>
    <property type="evidence" value="ECO:0007669"/>
    <property type="project" value="UniProtKB-KW"/>
</dbReference>
<dbReference type="InterPro" id="IPR002047">
    <property type="entry name" value="Adipokinetic_hormone_CS"/>
</dbReference>
<dbReference type="InterPro" id="IPR010475">
    <property type="entry name" value="AKH/RPCH_hormone"/>
</dbReference>
<dbReference type="Pfam" id="PF06377">
    <property type="entry name" value="Adipokin_hormo"/>
    <property type="match status" value="1"/>
</dbReference>
<dbReference type="PROSITE" id="PS00256">
    <property type="entry name" value="AKH"/>
    <property type="match status" value="1"/>
</dbReference>
<proteinExistence type="inferred from homology"/>
<evidence type="ECO:0000250" key="1"/>
<evidence type="ECO:0000305" key="2"/>
<protein>
    <recommendedName>
        <fullName>Red pigment-concentrating prohormone</fullName>
    </recommendedName>
    <component>
        <recommendedName>
            <fullName>Red pigment-concentrating hormone</fullName>
            <shortName>RPCH</shortName>
        </recommendedName>
    </component>
    <component>
        <recommendedName>
            <fullName>RPCH-related peptide</fullName>
        </recommendedName>
    </component>
</protein>